<name>DSBE_SALTI</name>
<sequence length="185" mass="20691">MKRNVLLLPLLIFLLIAAALLWQLARNAQGDDPTNLESALTGKPVPAFRLESLETPGQYYQAEVLTQGKPVLLNVWATWCPTCRAEHQYLNRLAAQGIRVVGLNYKDDRAKAVAWLKELGNPYALSLSDSDGMLGLDLGVYGAPETFLIDGRGIIRYRHAGDLNARVWESELKPLWDRYSREAAQ</sequence>
<organism>
    <name type="scientific">Salmonella typhi</name>
    <dbReference type="NCBI Taxonomy" id="90370"/>
    <lineage>
        <taxon>Bacteria</taxon>
        <taxon>Pseudomonadati</taxon>
        <taxon>Pseudomonadota</taxon>
        <taxon>Gammaproteobacteria</taxon>
        <taxon>Enterobacterales</taxon>
        <taxon>Enterobacteriaceae</taxon>
        <taxon>Salmonella</taxon>
    </lineage>
</organism>
<accession>Q8XFE5</accession>
<dbReference type="EMBL" id="AL513382">
    <property type="protein sequence ID" value="CAD07480.1"/>
    <property type="molecule type" value="Genomic_DNA"/>
</dbReference>
<dbReference type="EMBL" id="AL513382">
    <property type="protein sequence ID" value="CAD03181.1"/>
    <property type="molecule type" value="Genomic_DNA"/>
</dbReference>
<dbReference type="EMBL" id="AE014613">
    <property type="protein sequence ID" value="AAO68321.1"/>
    <property type="molecule type" value="Genomic_DNA"/>
</dbReference>
<dbReference type="EMBL" id="AE014613">
    <property type="protein sequence ID" value="AAO71200.1"/>
    <property type="molecule type" value="Genomic_DNA"/>
</dbReference>
<dbReference type="RefSeq" id="NP_456793.1">
    <property type="nucleotide sequence ID" value="NC_003198.1"/>
</dbReference>
<dbReference type="RefSeq" id="NP_458126.1">
    <property type="nucleotide sequence ID" value="NC_003198.1"/>
</dbReference>
<dbReference type="SMR" id="Q8XFE5"/>
<dbReference type="STRING" id="220341.gene:17586376"/>
<dbReference type="KEGG" id="stt:t0616"/>
<dbReference type="KEGG" id="stt:t3705"/>
<dbReference type="KEGG" id="sty:STY2474"/>
<dbReference type="KEGG" id="sty:STY3965"/>
<dbReference type="PATRIC" id="fig|220341.7.peg.2505"/>
<dbReference type="eggNOG" id="COG0526">
    <property type="taxonomic scope" value="Bacteria"/>
</dbReference>
<dbReference type="HOGENOM" id="CLU_042529_19_1_6"/>
<dbReference type="OMA" id="KWLAEFH"/>
<dbReference type="OrthoDB" id="9799347at2"/>
<dbReference type="Proteomes" id="UP000000541">
    <property type="component" value="Chromosome"/>
</dbReference>
<dbReference type="Proteomes" id="UP000002670">
    <property type="component" value="Chromosome"/>
</dbReference>
<dbReference type="GO" id="GO:0030288">
    <property type="term" value="C:outer membrane-bounded periplasmic space"/>
    <property type="evidence" value="ECO:0007669"/>
    <property type="project" value="InterPro"/>
</dbReference>
<dbReference type="GO" id="GO:0005886">
    <property type="term" value="C:plasma membrane"/>
    <property type="evidence" value="ECO:0007669"/>
    <property type="project" value="UniProtKB-SubCell"/>
</dbReference>
<dbReference type="GO" id="GO:0015036">
    <property type="term" value="F:disulfide oxidoreductase activity"/>
    <property type="evidence" value="ECO:0007669"/>
    <property type="project" value="InterPro"/>
</dbReference>
<dbReference type="GO" id="GO:0017004">
    <property type="term" value="P:cytochrome complex assembly"/>
    <property type="evidence" value="ECO:0007669"/>
    <property type="project" value="UniProtKB-KW"/>
</dbReference>
<dbReference type="CDD" id="cd03010">
    <property type="entry name" value="TlpA_like_DsbE"/>
    <property type="match status" value="1"/>
</dbReference>
<dbReference type="FunFam" id="3.40.30.10:FF:000040">
    <property type="entry name" value="Thiol:disulfide interchange protein DsbE"/>
    <property type="match status" value="1"/>
</dbReference>
<dbReference type="Gene3D" id="3.40.30.10">
    <property type="entry name" value="Glutaredoxin"/>
    <property type="match status" value="1"/>
</dbReference>
<dbReference type="InterPro" id="IPR004799">
    <property type="entry name" value="Periplasmic_diS_OxRdtase_DsbE"/>
</dbReference>
<dbReference type="InterPro" id="IPR013740">
    <property type="entry name" value="Redoxin"/>
</dbReference>
<dbReference type="InterPro" id="IPR036249">
    <property type="entry name" value="Thioredoxin-like_sf"/>
</dbReference>
<dbReference type="InterPro" id="IPR017937">
    <property type="entry name" value="Thioredoxin_CS"/>
</dbReference>
<dbReference type="InterPro" id="IPR013766">
    <property type="entry name" value="Thioredoxin_domain"/>
</dbReference>
<dbReference type="InterPro" id="IPR050553">
    <property type="entry name" value="Thioredoxin_ResA/DsbE_sf"/>
</dbReference>
<dbReference type="NCBIfam" id="TIGR00385">
    <property type="entry name" value="dsbE"/>
    <property type="match status" value="1"/>
</dbReference>
<dbReference type="NCBIfam" id="NF011941">
    <property type="entry name" value="PRK15412.1"/>
    <property type="match status" value="1"/>
</dbReference>
<dbReference type="PANTHER" id="PTHR42852">
    <property type="entry name" value="THIOL:DISULFIDE INTERCHANGE PROTEIN DSBE"/>
    <property type="match status" value="1"/>
</dbReference>
<dbReference type="PANTHER" id="PTHR42852:SF6">
    <property type="entry name" value="THIOL:DISULFIDE INTERCHANGE PROTEIN DSBE"/>
    <property type="match status" value="1"/>
</dbReference>
<dbReference type="Pfam" id="PF08534">
    <property type="entry name" value="Redoxin"/>
    <property type="match status" value="1"/>
</dbReference>
<dbReference type="SUPFAM" id="SSF52833">
    <property type="entry name" value="Thioredoxin-like"/>
    <property type="match status" value="1"/>
</dbReference>
<dbReference type="PROSITE" id="PS00194">
    <property type="entry name" value="THIOREDOXIN_1"/>
    <property type="match status" value="1"/>
</dbReference>
<dbReference type="PROSITE" id="PS51352">
    <property type="entry name" value="THIOREDOXIN_2"/>
    <property type="match status" value="1"/>
</dbReference>
<feature type="chain" id="PRO_0000201300" description="Thiol:disulfide interchange protein DsbE">
    <location>
        <begin position="1"/>
        <end position="185"/>
    </location>
</feature>
<feature type="topological domain" description="Cytoplasmic" evidence="2">
    <location>
        <begin position="1"/>
        <end position="4"/>
    </location>
</feature>
<feature type="transmembrane region" description="Helical" evidence="2">
    <location>
        <begin position="5"/>
        <end position="25"/>
    </location>
</feature>
<feature type="topological domain" description="Periplasmic" evidence="2">
    <location>
        <begin position="26"/>
        <end position="185"/>
    </location>
</feature>
<feature type="domain" description="Thioredoxin" evidence="3">
    <location>
        <begin position="39"/>
        <end position="177"/>
    </location>
</feature>
<feature type="disulfide bond" description="Redox-active" evidence="3">
    <location>
        <begin position="80"/>
        <end position="83"/>
    </location>
</feature>
<keyword id="KW-0997">Cell inner membrane</keyword>
<keyword id="KW-1003">Cell membrane</keyword>
<keyword id="KW-0201">Cytochrome c-type biogenesis</keyword>
<keyword id="KW-1015">Disulfide bond</keyword>
<keyword id="KW-0472">Membrane</keyword>
<keyword id="KW-0676">Redox-active center</keyword>
<keyword id="KW-0812">Transmembrane</keyword>
<keyword id="KW-1133">Transmembrane helix</keyword>
<protein>
    <recommendedName>
        <fullName>Thiol:disulfide interchange protein DsbE</fullName>
    </recommendedName>
    <alternativeName>
        <fullName>Cytochrome c biogenesis protein CcmG</fullName>
    </alternativeName>
</protein>
<reference key="1">
    <citation type="journal article" date="2001" name="Nature">
        <title>Complete genome sequence of a multiple drug resistant Salmonella enterica serovar Typhi CT18.</title>
        <authorList>
            <person name="Parkhill J."/>
            <person name="Dougan G."/>
            <person name="James K.D."/>
            <person name="Thomson N.R."/>
            <person name="Pickard D."/>
            <person name="Wain J."/>
            <person name="Churcher C.M."/>
            <person name="Mungall K.L."/>
            <person name="Bentley S.D."/>
            <person name="Holden M.T.G."/>
            <person name="Sebaihia M."/>
            <person name="Baker S."/>
            <person name="Basham D."/>
            <person name="Brooks K."/>
            <person name="Chillingworth T."/>
            <person name="Connerton P."/>
            <person name="Cronin A."/>
            <person name="Davis P."/>
            <person name="Davies R.M."/>
            <person name="Dowd L."/>
            <person name="White N."/>
            <person name="Farrar J."/>
            <person name="Feltwell T."/>
            <person name="Hamlin N."/>
            <person name="Haque A."/>
            <person name="Hien T.T."/>
            <person name="Holroyd S."/>
            <person name="Jagels K."/>
            <person name="Krogh A."/>
            <person name="Larsen T.S."/>
            <person name="Leather S."/>
            <person name="Moule S."/>
            <person name="O'Gaora P."/>
            <person name="Parry C."/>
            <person name="Quail M.A."/>
            <person name="Rutherford K.M."/>
            <person name="Simmonds M."/>
            <person name="Skelton J."/>
            <person name="Stevens K."/>
            <person name="Whitehead S."/>
            <person name="Barrell B.G."/>
        </authorList>
    </citation>
    <scope>NUCLEOTIDE SEQUENCE [LARGE SCALE GENOMIC DNA]</scope>
    <source>
        <strain>CT18</strain>
    </source>
</reference>
<reference key="2">
    <citation type="journal article" date="2003" name="J. Bacteriol.">
        <title>Comparative genomics of Salmonella enterica serovar Typhi strains Ty2 and CT18.</title>
        <authorList>
            <person name="Deng W."/>
            <person name="Liou S.-R."/>
            <person name="Plunkett G. III"/>
            <person name="Mayhew G.F."/>
            <person name="Rose D.J."/>
            <person name="Burland V."/>
            <person name="Kodoyianni V."/>
            <person name="Schwartz D.C."/>
            <person name="Blattner F.R."/>
        </authorList>
    </citation>
    <scope>NUCLEOTIDE SEQUENCE [LARGE SCALE GENOMIC DNA]</scope>
    <source>
        <strain>ATCC 700931 / Ty2</strain>
    </source>
</reference>
<comment type="function">
    <text evidence="1">Involved in disulfide bond formation. Catalyzes a late, reductive step in the assembly of periplasmic c-type cytochromes, probably the reduction of disulfide bonds of the apocytochrome c to allow covalent linkage with the heme. Possible subunit of a heme lyase (By similarity).</text>
</comment>
<comment type="subcellular location">
    <subcellularLocation>
        <location evidence="1">Cell inner membrane</location>
        <topology evidence="1">Single-pass membrane protein</topology>
        <orientation evidence="1">Periplasmic side</orientation>
    </subcellularLocation>
</comment>
<comment type="similarity">
    <text evidence="4">Belongs to the thioredoxin family. DsbE subfamily.</text>
</comment>
<gene>
    <name type="primary">dsbE1</name>
    <name type="synonym">ccmG1</name>
    <name type="ordered locus">STY2474</name>
    <name type="ordered locus">t0616</name>
</gene>
<gene>
    <name type="primary">dsbE2</name>
    <name type="synonym">ccmG2</name>
    <name type="ordered locus">STY3965</name>
    <name type="ordered locus">t3705</name>
</gene>
<evidence type="ECO:0000250" key="1"/>
<evidence type="ECO:0000255" key="2"/>
<evidence type="ECO:0000255" key="3">
    <source>
        <dbReference type="PROSITE-ProRule" id="PRU00691"/>
    </source>
</evidence>
<evidence type="ECO:0000305" key="4"/>
<proteinExistence type="inferred from homology"/>